<name>YOAH_ECO55</name>
<proteinExistence type="inferred from homology"/>
<dbReference type="EMBL" id="CU928145">
    <property type="protein sequence ID" value="CAU97842.1"/>
    <property type="molecule type" value="Genomic_DNA"/>
</dbReference>
<dbReference type="RefSeq" id="WP_000457334.1">
    <property type="nucleotide sequence ID" value="NZ_CP028304.1"/>
</dbReference>
<dbReference type="SMR" id="B7L6T9"/>
<dbReference type="KEGG" id="eck:EC55989_1984"/>
<dbReference type="HOGENOM" id="CLU_185263_0_0_6"/>
<dbReference type="Proteomes" id="UP000000746">
    <property type="component" value="Chromosome"/>
</dbReference>
<dbReference type="HAMAP" id="MF_00507">
    <property type="entry name" value="UPF0181"/>
    <property type="match status" value="1"/>
</dbReference>
<dbReference type="InterPro" id="IPR005371">
    <property type="entry name" value="UPF0181"/>
</dbReference>
<dbReference type="NCBIfam" id="NF003476">
    <property type="entry name" value="PRK05114.1"/>
    <property type="match status" value="1"/>
</dbReference>
<dbReference type="Pfam" id="PF03701">
    <property type="entry name" value="UPF0181"/>
    <property type="match status" value="1"/>
</dbReference>
<keyword id="KW-1185">Reference proteome</keyword>
<protein>
    <recommendedName>
        <fullName evidence="1">UPF0181 protein YoaH</fullName>
    </recommendedName>
</protein>
<organism>
    <name type="scientific">Escherichia coli (strain 55989 / EAEC)</name>
    <dbReference type="NCBI Taxonomy" id="585055"/>
    <lineage>
        <taxon>Bacteria</taxon>
        <taxon>Pseudomonadati</taxon>
        <taxon>Pseudomonadota</taxon>
        <taxon>Gammaproteobacteria</taxon>
        <taxon>Enterobacterales</taxon>
        <taxon>Enterobacteriaceae</taxon>
        <taxon>Escherichia</taxon>
    </lineage>
</organism>
<evidence type="ECO:0000255" key="1">
    <source>
        <dbReference type="HAMAP-Rule" id="MF_00507"/>
    </source>
</evidence>
<sequence>MFAGLPSLTHEQQQKAVERIQELMAQGMSSGQAIALVAEELRANHSGERIVARFEDEDE</sequence>
<feature type="chain" id="PRO_1000197845" description="UPF0181 protein YoaH">
    <location>
        <begin position="1"/>
        <end position="59"/>
    </location>
</feature>
<gene>
    <name evidence="1" type="primary">yoaH</name>
    <name type="ordered locus">EC55989_1984</name>
</gene>
<comment type="similarity">
    <text evidence="1">Belongs to the UPF0181 family.</text>
</comment>
<accession>B7L6T9</accession>
<reference key="1">
    <citation type="journal article" date="2009" name="PLoS Genet.">
        <title>Organised genome dynamics in the Escherichia coli species results in highly diverse adaptive paths.</title>
        <authorList>
            <person name="Touchon M."/>
            <person name="Hoede C."/>
            <person name="Tenaillon O."/>
            <person name="Barbe V."/>
            <person name="Baeriswyl S."/>
            <person name="Bidet P."/>
            <person name="Bingen E."/>
            <person name="Bonacorsi S."/>
            <person name="Bouchier C."/>
            <person name="Bouvet O."/>
            <person name="Calteau A."/>
            <person name="Chiapello H."/>
            <person name="Clermont O."/>
            <person name="Cruveiller S."/>
            <person name="Danchin A."/>
            <person name="Diard M."/>
            <person name="Dossat C."/>
            <person name="Karoui M.E."/>
            <person name="Frapy E."/>
            <person name="Garry L."/>
            <person name="Ghigo J.M."/>
            <person name="Gilles A.M."/>
            <person name="Johnson J."/>
            <person name="Le Bouguenec C."/>
            <person name="Lescat M."/>
            <person name="Mangenot S."/>
            <person name="Martinez-Jehanne V."/>
            <person name="Matic I."/>
            <person name="Nassif X."/>
            <person name="Oztas S."/>
            <person name="Petit M.A."/>
            <person name="Pichon C."/>
            <person name="Rouy Z."/>
            <person name="Ruf C.S."/>
            <person name="Schneider D."/>
            <person name="Tourret J."/>
            <person name="Vacherie B."/>
            <person name="Vallenet D."/>
            <person name="Medigue C."/>
            <person name="Rocha E.P.C."/>
            <person name="Denamur E."/>
        </authorList>
    </citation>
    <scope>NUCLEOTIDE SEQUENCE [LARGE SCALE GENOMIC DNA]</scope>
    <source>
        <strain>55989 / EAEC</strain>
    </source>
</reference>